<protein>
    <recommendedName>
        <fullName evidence="1">Large ribosomal subunit protein bL36</fullName>
    </recommendedName>
    <alternativeName>
        <fullName evidence="2">50S ribosomal protein L36</fullName>
    </alternativeName>
</protein>
<name>RL36_DEHM1</name>
<comment type="similarity">
    <text evidence="1">Belongs to the bacterial ribosomal protein bL36 family.</text>
</comment>
<dbReference type="EMBL" id="CP000027">
    <property type="protein sequence ID" value="AAW40260.1"/>
    <property type="molecule type" value="Genomic_DNA"/>
</dbReference>
<dbReference type="SMR" id="Q3Z957"/>
<dbReference type="FunCoup" id="Q3Z957">
    <property type="interactions" value="107"/>
</dbReference>
<dbReference type="STRING" id="243164.DET0498"/>
<dbReference type="KEGG" id="det:DET0498"/>
<dbReference type="eggNOG" id="COG0257">
    <property type="taxonomic scope" value="Bacteria"/>
</dbReference>
<dbReference type="HOGENOM" id="CLU_135723_6_2_0"/>
<dbReference type="InParanoid" id="Q3Z957"/>
<dbReference type="Proteomes" id="UP000008289">
    <property type="component" value="Chromosome"/>
</dbReference>
<dbReference type="GO" id="GO:0005737">
    <property type="term" value="C:cytoplasm"/>
    <property type="evidence" value="ECO:0007669"/>
    <property type="project" value="UniProtKB-ARBA"/>
</dbReference>
<dbReference type="GO" id="GO:1990904">
    <property type="term" value="C:ribonucleoprotein complex"/>
    <property type="evidence" value="ECO:0007669"/>
    <property type="project" value="UniProtKB-KW"/>
</dbReference>
<dbReference type="GO" id="GO:0005840">
    <property type="term" value="C:ribosome"/>
    <property type="evidence" value="ECO:0007669"/>
    <property type="project" value="UniProtKB-KW"/>
</dbReference>
<dbReference type="GO" id="GO:0003735">
    <property type="term" value="F:structural constituent of ribosome"/>
    <property type="evidence" value="ECO:0007669"/>
    <property type="project" value="InterPro"/>
</dbReference>
<dbReference type="GO" id="GO:0006412">
    <property type="term" value="P:translation"/>
    <property type="evidence" value="ECO:0007669"/>
    <property type="project" value="UniProtKB-UniRule"/>
</dbReference>
<dbReference type="HAMAP" id="MF_00251">
    <property type="entry name" value="Ribosomal_bL36"/>
    <property type="match status" value="1"/>
</dbReference>
<dbReference type="InterPro" id="IPR000473">
    <property type="entry name" value="Ribosomal_bL36"/>
</dbReference>
<dbReference type="InterPro" id="IPR035977">
    <property type="entry name" value="Ribosomal_bL36_sp"/>
</dbReference>
<dbReference type="NCBIfam" id="TIGR01022">
    <property type="entry name" value="rpmJ_bact"/>
    <property type="match status" value="1"/>
</dbReference>
<dbReference type="PANTHER" id="PTHR42888">
    <property type="entry name" value="50S RIBOSOMAL PROTEIN L36, CHLOROPLASTIC"/>
    <property type="match status" value="1"/>
</dbReference>
<dbReference type="PANTHER" id="PTHR42888:SF1">
    <property type="entry name" value="LARGE RIBOSOMAL SUBUNIT PROTEIN BL36C"/>
    <property type="match status" value="1"/>
</dbReference>
<dbReference type="Pfam" id="PF00444">
    <property type="entry name" value="Ribosomal_L36"/>
    <property type="match status" value="1"/>
</dbReference>
<dbReference type="SUPFAM" id="SSF57840">
    <property type="entry name" value="Ribosomal protein L36"/>
    <property type="match status" value="1"/>
</dbReference>
<sequence>MKVRASVKTMCEKCKIVKRNGVVRNICTNPKHKQRQG</sequence>
<organism>
    <name type="scientific">Dehalococcoides mccartyi (strain ATCC BAA-2266 / KCTC 15142 / 195)</name>
    <name type="common">Dehalococcoides ethenogenes (strain 195)</name>
    <dbReference type="NCBI Taxonomy" id="243164"/>
    <lineage>
        <taxon>Bacteria</taxon>
        <taxon>Bacillati</taxon>
        <taxon>Chloroflexota</taxon>
        <taxon>Dehalococcoidia</taxon>
        <taxon>Dehalococcoidales</taxon>
        <taxon>Dehalococcoidaceae</taxon>
        <taxon>Dehalococcoides</taxon>
    </lineage>
</organism>
<feature type="chain" id="PRO_0000302193" description="Large ribosomal subunit protein bL36">
    <location>
        <begin position="1"/>
        <end position="37"/>
    </location>
</feature>
<gene>
    <name evidence="1" type="primary">rpmJ</name>
    <name type="ordered locus">DET0498</name>
</gene>
<proteinExistence type="inferred from homology"/>
<keyword id="KW-0687">Ribonucleoprotein</keyword>
<keyword id="KW-0689">Ribosomal protein</keyword>
<reference key="1">
    <citation type="journal article" date="2005" name="Science">
        <title>Genome sequence of the PCE-dechlorinating bacterium Dehalococcoides ethenogenes.</title>
        <authorList>
            <person name="Seshadri R."/>
            <person name="Adrian L."/>
            <person name="Fouts D.E."/>
            <person name="Eisen J.A."/>
            <person name="Phillippy A.M."/>
            <person name="Methe B.A."/>
            <person name="Ward N.L."/>
            <person name="Nelson W.C."/>
            <person name="DeBoy R.T."/>
            <person name="Khouri H.M."/>
            <person name="Kolonay J.F."/>
            <person name="Dodson R.J."/>
            <person name="Daugherty S.C."/>
            <person name="Brinkac L.M."/>
            <person name="Sullivan S.A."/>
            <person name="Madupu R."/>
            <person name="Nelson K.E."/>
            <person name="Kang K.H."/>
            <person name="Impraim M."/>
            <person name="Tran K."/>
            <person name="Robinson J.M."/>
            <person name="Forberger H.A."/>
            <person name="Fraser C.M."/>
            <person name="Zinder S.H."/>
            <person name="Heidelberg J.F."/>
        </authorList>
    </citation>
    <scope>NUCLEOTIDE SEQUENCE [LARGE SCALE GENOMIC DNA]</scope>
    <source>
        <strain>ATCC BAA-2266 / KCTC 15142 / 195</strain>
    </source>
</reference>
<evidence type="ECO:0000255" key="1">
    <source>
        <dbReference type="HAMAP-Rule" id="MF_00251"/>
    </source>
</evidence>
<evidence type="ECO:0000305" key="2"/>
<accession>Q3Z957</accession>